<feature type="chain" id="PRO_0000413119" description="Inosine triphosphate pyrophosphatase">
    <location>
        <begin position="1"/>
        <end position="206"/>
    </location>
</feature>
<feature type="binding site" evidence="1">
    <location>
        <begin position="21"/>
        <end position="26"/>
    </location>
    <ligand>
        <name>ITP</name>
        <dbReference type="ChEBI" id="CHEBI:61402"/>
    </ligand>
</feature>
<feature type="binding site" evidence="1">
    <location>
        <position position="49"/>
    </location>
    <ligand>
        <name>Mg(2+)</name>
        <dbReference type="ChEBI" id="CHEBI:18420"/>
    </ligand>
</feature>
<feature type="binding site" evidence="1">
    <location>
        <position position="61"/>
    </location>
    <ligand>
        <name>ITP</name>
        <dbReference type="ChEBI" id="CHEBI:61402"/>
    </ligand>
</feature>
<feature type="binding site" evidence="1">
    <location>
        <begin position="77"/>
        <end position="78"/>
    </location>
    <ligand>
        <name>ITP</name>
        <dbReference type="ChEBI" id="CHEBI:61402"/>
    </ligand>
</feature>
<feature type="binding site" evidence="1">
    <location>
        <position position="94"/>
    </location>
    <ligand>
        <name>ITP</name>
        <dbReference type="ChEBI" id="CHEBI:61402"/>
    </ligand>
</feature>
<feature type="binding site" evidence="1">
    <location>
        <begin position="153"/>
        <end position="156"/>
    </location>
    <ligand>
        <name>ITP</name>
        <dbReference type="ChEBI" id="CHEBI:61402"/>
    </ligand>
</feature>
<feature type="binding site" evidence="1">
    <location>
        <position position="176"/>
    </location>
    <ligand>
        <name>ITP</name>
        <dbReference type="ChEBI" id="CHEBI:61402"/>
    </ligand>
</feature>
<feature type="binding site" evidence="1">
    <location>
        <begin position="181"/>
        <end position="182"/>
    </location>
    <ligand>
        <name>ITP</name>
        <dbReference type="ChEBI" id="CHEBI:61402"/>
    </ligand>
</feature>
<sequence>MAAAGASASGLILSRPVTFVTGNAKKLEEVRYILGQSIPFNSLKLDLPELQGEPEDISKEKARLAAIQVNGPVLVEDTCLCFNALKGLPGPYIKWFLQKIGHEGLNNLLMAYEDKSAYALCAFSFALGPDAEPVTFLGKTPGKIVPPRGPNDFGWDPIFQPDGYEQTYAEMPKEEKNKISHRYKALALVKSHFAKAGYVFQTDSPI</sequence>
<proteinExistence type="evidence at transcript level"/>
<keyword id="KW-0963">Cytoplasm</keyword>
<keyword id="KW-0378">Hydrolase</keyword>
<keyword id="KW-0460">Magnesium</keyword>
<keyword id="KW-0464">Manganese</keyword>
<keyword id="KW-0479">Metal-binding</keyword>
<keyword id="KW-0546">Nucleotide metabolism</keyword>
<keyword id="KW-0547">Nucleotide-binding</keyword>
<keyword id="KW-1185">Reference proteome</keyword>
<accession>F6HS55</accession>
<protein>
    <recommendedName>
        <fullName evidence="1">Inosine triphosphate pyrophosphatase</fullName>
        <shortName evidence="1">ITPase</shortName>
        <shortName evidence="1">Inosine triphosphatase</shortName>
        <ecNumber evidence="1">3.6.1.66</ecNumber>
    </recommendedName>
    <alternativeName>
        <fullName evidence="1">Non-canonical purine NTP pyrophosphatase</fullName>
    </alternativeName>
    <alternativeName>
        <fullName evidence="1">Non-standard purine NTP pyrophosphatase</fullName>
    </alternativeName>
    <alternativeName>
        <fullName evidence="1">Nucleoside-triphosphate diphosphatase</fullName>
    </alternativeName>
    <alternativeName>
        <fullName evidence="1">Nucleoside-triphosphate pyrophosphatase</fullName>
        <shortName evidence="1">NTPase</shortName>
    </alternativeName>
    <alternativeName>
        <fullName evidence="1">XTP/dITP diphosphatase</fullName>
    </alternativeName>
</protein>
<comment type="function">
    <text evidence="1">Pyrophosphatase that hydrolyzes non-canonical purine nucleotides such as inosine triphosphate (ITP), deoxyinosine triphosphate (dITP) or xanthosine 5'-triphosphate (XTP) to their respective monophosphate derivatives. The enzyme does not distinguish between the deoxy- and ribose forms. Probably excludes non-canonical purines from RNA and DNA precursor pools, thus preventing their incorporation into RNA and DNA and avoiding chromosomal lesions.</text>
</comment>
<comment type="catalytic activity">
    <reaction evidence="1">
        <text>ITP + H2O = IMP + diphosphate + H(+)</text>
        <dbReference type="Rhea" id="RHEA:29399"/>
        <dbReference type="ChEBI" id="CHEBI:15377"/>
        <dbReference type="ChEBI" id="CHEBI:15378"/>
        <dbReference type="ChEBI" id="CHEBI:33019"/>
        <dbReference type="ChEBI" id="CHEBI:58053"/>
        <dbReference type="ChEBI" id="CHEBI:61402"/>
        <dbReference type="EC" id="3.6.1.66"/>
    </reaction>
    <physiologicalReaction direction="left-to-right" evidence="1">
        <dbReference type="Rhea" id="RHEA:29400"/>
    </physiologicalReaction>
</comment>
<comment type="catalytic activity">
    <reaction evidence="1">
        <text>dITP + H2O = dIMP + diphosphate + H(+)</text>
        <dbReference type="Rhea" id="RHEA:28342"/>
        <dbReference type="ChEBI" id="CHEBI:15377"/>
        <dbReference type="ChEBI" id="CHEBI:15378"/>
        <dbReference type="ChEBI" id="CHEBI:33019"/>
        <dbReference type="ChEBI" id="CHEBI:61194"/>
        <dbReference type="ChEBI" id="CHEBI:61382"/>
        <dbReference type="EC" id="3.6.1.66"/>
    </reaction>
    <physiologicalReaction direction="left-to-right" evidence="1">
        <dbReference type="Rhea" id="RHEA:28343"/>
    </physiologicalReaction>
</comment>
<comment type="catalytic activity">
    <reaction evidence="1">
        <text>XTP + H2O = XMP + diphosphate + H(+)</text>
        <dbReference type="Rhea" id="RHEA:28610"/>
        <dbReference type="ChEBI" id="CHEBI:15377"/>
        <dbReference type="ChEBI" id="CHEBI:15378"/>
        <dbReference type="ChEBI" id="CHEBI:33019"/>
        <dbReference type="ChEBI" id="CHEBI:57464"/>
        <dbReference type="ChEBI" id="CHEBI:61314"/>
        <dbReference type="EC" id="3.6.1.66"/>
    </reaction>
    <physiologicalReaction direction="left-to-right" evidence="1">
        <dbReference type="Rhea" id="RHEA:28611"/>
    </physiologicalReaction>
</comment>
<comment type="cofactor">
    <cofactor evidence="1">
        <name>Mg(2+)</name>
        <dbReference type="ChEBI" id="CHEBI:18420"/>
    </cofactor>
    <cofactor evidence="1">
        <name>Mn(2+)</name>
        <dbReference type="ChEBI" id="CHEBI:29035"/>
    </cofactor>
    <text evidence="1">Binds 1 divalent metal cation per subunit; can use either Mg(2+) or Mn(2+).</text>
</comment>
<comment type="subunit">
    <text evidence="1">Homodimer.</text>
</comment>
<comment type="subcellular location">
    <subcellularLocation>
        <location evidence="1">Cytoplasm</location>
    </subcellularLocation>
</comment>
<comment type="similarity">
    <text evidence="1">Belongs to the HAM1 NTPase family.</text>
</comment>
<organism>
    <name type="scientific">Vitis vinifera</name>
    <name type="common">Grape</name>
    <dbReference type="NCBI Taxonomy" id="29760"/>
    <lineage>
        <taxon>Eukaryota</taxon>
        <taxon>Viridiplantae</taxon>
        <taxon>Streptophyta</taxon>
        <taxon>Embryophyta</taxon>
        <taxon>Tracheophyta</taxon>
        <taxon>Spermatophyta</taxon>
        <taxon>Magnoliopsida</taxon>
        <taxon>eudicotyledons</taxon>
        <taxon>Gunneridae</taxon>
        <taxon>Pentapetalae</taxon>
        <taxon>rosids</taxon>
        <taxon>Vitales</taxon>
        <taxon>Vitaceae</taxon>
        <taxon>Viteae</taxon>
        <taxon>Vitis</taxon>
    </lineage>
</organism>
<reference key="1">
    <citation type="journal article" date="2007" name="Nature">
        <title>The grapevine genome sequence suggests ancestral hexaploidization in major angiosperm phyla.</title>
        <authorList>
            <person name="Jaillon O."/>
            <person name="Aury J.-M."/>
            <person name="Noel B."/>
            <person name="Policriti A."/>
            <person name="Clepet C."/>
            <person name="Casagrande A."/>
            <person name="Choisne N."/>
            <person name="Aubourg S."/>
            <person name="Vitulo N."/>
            <person name="Jubin C."/>
            <person name="Vezzi A."/>
            <person name="Legeai F."/>
            <person name="Hugueney P."/>
            <person name="Dasilva C."/>
            <person name="Horner D."/>
            <person name="Mica E."/>
            <person name="Jublot D."/>
            <person name="Poulain J."/>
            <person name="Bruyere C."/>
            <person name="Billault A."/>
            <person name="Segurens B."/>
            <person name="Gouyvenoux M."/>
            <person name="Ugarte E."/>
            <person name="Cattonaro F."/>
            <person name="Anthouard V."/>
            <person name="Vico V."/>
            <person name="Del Fabbro C."/>
            <person name="Alaux M."/>
            <person name="Di Gaspero G."/>
            <person name="Dumas V."/>
            <person name="Felice N."/>
            <person name="Paillard S."/>
            <person name="Juman I."/>
            <person name="Moroldo M."/>
            <person name="Scalabrin S."/>
            <person name="Canaguier A."/>
            <person name="Le Clainche I."/>
            <person name="Malacrida G."/>
            <person name="Durand E."/>
            <person name="Pesole G."/>
            <person name="Laucou V."/>
            <person name="Chatelet P."/>
            <person name="Merdinoglu D."/>
            <person name="Delledonne M."/>
            <person name="Pezzotti M."/>
            <person name="Lecharny A."/>
            <person name="Scarpelli C."/>
            <person name="Artiguenave F."/>
            <person name="Pe M.E."/>
            <person name="Valle G."/>
            <person name="Morgante M."/>
            <person name="Caboche M."/>
            <person name="Adam-Blondon A.-F."/>
            <person name="Weissenbach J."/>
            <person name="Quetier F."/>
            <person name="Wincker P."/>
        </authorList>
    </citation>
    <scope>NUCLEOTIDE SEQUENCE [LARGE SCALE GENOMIC DNA]</scope>
    <source>
        <strain>cv. Pinot noir / PN40024</strain>
    </source>
</reference>
<gene>
    <name type="ordered locus">VIT_05s0051g00580</name>
    <name type="ORF">Vv05s0051g00580</name>
</gene>
<name>ITPA_VITVI</name>
<dbReference type="EC" id="3.6.1.66" evidence="1"/>
<dbReference type="EMBL" id="FN596241">
    <property type="protein sequence ID" value="CCB57514.1"/>
    <property type="molecule type" value="Genomic_DNA"/>
</dbReference>
<dbReference type="EMBL" id="FN597023">
    <property type="status" value="NOT_ANNOTATED_CDS"/>
    <property type="molecule type" value="Genomic_DNA"/>
</dbReference>
<dbReference type="RefSeq" id="XP_002285637.1">
    <property type="nucleotide sequence ID" value="XM_002285601.4"/>
</dbReference>
<dbReference type="SMR" id="F6HS55"/>
<dbReference type="FunCoup" id="F6HS55">
    <property type="interactions" value="2900"/>
</dbReference>
<dbReference type="STRING" id="29760.F6HS55"/>
<dbReference type="PaxDb" id="29760-VIT_05s0051g00580.t01"/>
<dbReference type="EnsemblPlants" id="Vitvi05g00952_t001">
    <property type="protein sequence ID" value="Vitvi05g00952_P001"/>
    <property type="gene ID" value="Vitvi05g00952"/>
</dbReference>
<dbReference type="Gramene" id="Vitvi05g00952_t001">
    <property type="protein sequence ID" value="Vitvi05g00952_P001"/>
    <property type="gene ID" value="Vitvi05g00952"/>
</dbReference>
<dbReference type="eggNOG" id="KOG3222">
    <property type="taxonomic scope" value="Eukaryota"/>
</dbReference>
<dbReference type="HOGENOM" id="CLU_082080_1_1_1"/>
<dbReference type="InParanoid" id="F6HS55"/>
<dbReference type="OrthoDB" id="6288734at2759"/>
<dbReference type="Proteomes" id="UP000009183">
    <property type="component" value="Chromosome 5"/>
</dbReference>
<dbReference type="Proteomes" id="UP000009183">
    <property type="component" value="Chromosome 5, unordered"/>
</dbReference>
<dbReference type="ExpressionAtlas" id="F6HS55">
    <property type="expression patterns" value="baseline and differential"/>
</dbReference>
<dbReference type="GO" id="GO:0005737">
    <property type="term" value="C:cytoplasm"/>
    <property type="evidence" value="ECO:0000318"/>
    <property type="project" value="GO_Central"/>
</dbReference>
<dbReference type="GO" id="GO:0035870">
    <property type="term" value="F:dITP diphosphatase activity"/>
    <property type="evidence" value="ECO:0007669"/>
    <property type="project" value="RHEA"/>
</dbReference>
<dbReference type="GO" id="GO:0036220">
    <property type="term" value="F:ITP diphosphatase activity"/>
    <property type="evidence" value="ECO:0007669"/>
    <property type="project" value="RHEA"/>
</dbReference>
<dbReference type="GO" id="GO:0046872">
    <property type="term" value="F:metal ion binding"/>
    <property type="evidence" value="ECO:0007669"/>
    <property type="project" value="UniProtKB-KW"/>
</dbReference>
<dbReference type="GO" id="GO:0047429">
    <property type="term" value="F:nucleoside triphosphate diphosphatase activity"/>
    <property type="evidence" value="ECO:0000318"/>
    <property type="project" value="GO_Central"/>
</dbReference>
<dbReference type="GO" id="GO:0000166">
    <property type="term" value="F:nucleotide binding"/>
    <property type="evidence" value="ECO:0007669"/>
    <property type="project" value="UniProtKB-KW"/>
</dbReference>
<dbReference type="GO" id="GO:0036222">
    <property type="term" value="F:XTP diphosphatase activity"/>
    <property type="evidence" value="ECO:0007669"/>
    <property type="project" value="RHEA"/>
</dbReference>
<dbReference type="GO" id="GO:0009204">
    <property type="term" value="P:deoxyribonucleoside triphosphate catabolic process"/>
    <property type="evidence" value="ECO:0007669"/>
    <property type="project" value="UniProtKB-UniRule"/>
</dbReference>
<dbReference type="GO" id="GO:0009143">
    <property type="term" value="P:nucleoside triphosphate catabolic process"/>
    <property type="evidence" value="ECO:0000318"/>
    <property type="project" value="GO_Central"/>
</dbReference>
<dbReference type="GO" id="GO:0009117">
    <property type="term" value="P:nucleotide metabolic process"/>
    <property type="evidence" value="ECO:0007669"/>
    <property type="project" value="UniProtKB-KW"/>
</dbReference>
<dbReference type="CDD" id="cd00515">
    <property type="entry name" value="HAM1"/>
    <property type="match status" value="1"/>
</dbReference>
<dbReference type="FunFam" id="3.90.950.10:FF:000003">
    <property type="entry name" value="Inosine triphosphate pyrophosphatase"/>
    <property type="match status" value="1"/>
</dbReference>
<dbReference type="Gene3D" id="3.90.950.10">
    <property type="match status" value="1"/>
</dbReference>
<dbReference type="HAMAP" id="MF_03148">
    <property type="entry name" value="HAM1_NTPase"/>
    <property type="match status" value="1"/>
</dbReference>
<dbReference type="InterPro" id="IPR027502">
    <property type="entry name" value="ITPase"/>
</dbReference>
<dbReference type="InterPro" id="IPR029001">
    <property type="entry name" value="ITPase-like_fam"/>
</dbReference>
<dbReference type="InterPro" id="IPR002637">
    <property type="entry name" value="RdgB/HAM1"/>
</dbReference>
<dbReference type="NCBIfam" id="TIGR00042">
    <property type="entry name" value="RdgB/HAM1 family non-canonical purine NTP pyrophosphatase"/>
    <property type="match status" value="1"/>
</dbReference>
<dbReference type="PANTHER" id="PTHR11067:SF9">
    <property type="entry name" value="INOSINE TRIPHOSPHATE PYROPHOSPHATASE"/>
    <property type="match status" value="1"/>
</dbReference>
<dbReference type="PANTHER" id="PTHR11067">
    <property type="entry name" value="INOSINE TRIPHOSPHATE PYROPHOSPHATASE/HAM1 PROTEIN"/>
    <property type="match status" value="1"/>
</dbReference>
<dbReference type="Pfam" id="PF01725">
    <property type="entry name" value="Ham1p_like"/>
    <property type="match status" value="1"/>
</dbReference>
<dbReference type="SUPFAM" id="SSF52972">
    <property type="entry name" value="ITPase-like"/>
    <property type="match status" value="1"/>
</dbReference>
<evidence type="ECO:0000255" key="1">
    <source>
        <dbReference type="HAMAP-Rule" id="MF_03148"/>
    </source>
</evidence>